<accession>Q9HKR2</accession>
<keyword id="KW-0963">Cytoplasm</keyword>
<keyword id="KW-0648">Protein biosynthesis</keyword>
<keyword id="KW-1185">Reference proteome</keyword>
<name>RF1_THEAC</name>
<evidence type="ECO:0000250" key="1"/>
<evidence type="ECO:0000305" key="2"/>
<feature type="chain" id="PRO_0000143186" description="Peptide chain release factor subunit 1">
    <location>
        <begin position="1"/>
        <end position="417"/>
    </location>
</feature>
<reference key="1">
    <citation type="journal article" date="2000" name="Nature">
        <title>The genome sequence of the thermoacidophilic scavenger Thermoplasma acidophilum.</title>
        <authorList>
            <person name="Ruepp A."/>
            <person name="Graml W."/>
            <person name="Santos-Martinez M.-L."/>
            <person name="Koretke K.K."/>
            <person name="Volker C."/>
            <person name="Mewes H.-W."/>
            <person name="Frishman D."/>
            <person name="Stocker S."/>
            <person name="Lupas A.N."/>
            <person name="Baumeister W."/>
        </authorList>
    </citation>
    <scope>NUCLEOTIDE SEQUENCE [LARGE SCALE GENOMIC DNA]</scope>
    <source>
        <strain>ATCC 25905 / DSM 1728 / JCM 9062 / NBRC 15155 / AMRC-C165</strain>
    </source>
</reference>
<protein>
    <recommendedName>
        <fullName>Peptide chain release factor subunit 1</fullName>
    </recommendedName>
    <alternativeName>
        <fullName>Translation termination factor aRF1</fullName>
    </alternativeName>
</protein>
<organism>
    <name type="scientific">Thermoplasma acidophilum (strain ATCC 25905 / DSM 1728 / JCM 9062 / NBRC 15155 / AMRC-C165)</name>
    <dbReference type="NCBI Taxonomy" id="273075"/>
    <lineage>
        <taxon>Archaea</taxon>
        <taxon>Methanobacteriati</taxon>
        <taxon>Thermoplasmatota</taxon>
        <taxon>Thermoplasmata</taxon>
        <taxon>Thermoplasmatales</taxon>
        <taxon>Thermoplasmataceae</taxon>
        <taxon>Thermoplasma</taxon>
    </lineage>
</organism>
<dbReference type="EMBL" id="AL445064">
    <property type="protein sequence ID" value="CAC11674.1"/>
    <property type="molecule type" value="Genomic_DNA"/>
</dbReference>
<dbReference type="SMR" id="Q9HKR2"/>
<dbReference type="FunCoup" id="Q9HKR2">
    <property type="interactions" value="243"/>
</dbReference>
<dbReference type="STRING" id="273075.gene:9571754"/>
<dbReference type="PaxDb" id="273075-Ta0534"/>
<dbReference type="EnsemblBacteria" id="CAC11674">
    <property type="protein sequence ID" value="CAC11674"/>
    <property type="gene ID" value="CAC11674"/>
</dbReference>
<dbReference type="KEGG" id="tac:Ta0534"/>
<dbReference type="eggNOG" id="arCOG01742">
    <property type="taxonomic scope" value="Archaea"/>
</dbReference>
<dbReference type="HOGENOM" id="CLU_035759_3_0_2"/>
<dbReference type="InParanoid" id="Q9HKR2"/>
<dbReference type="Proteomes" id="UP000001024">
    <property type="component" value="Chromosome"/>
</dbReference>
<dbReference type="GO" id="GO:0005737">
    <property type="term" value="C:cytoplasm"/>
    <property type="evidence" value="ECO:0007669"/>
    <property type="project" value="UniProtKB-SubCell"/>
</dbReference>
<dbReference type="GO" id="GO:0016149">
    <property type="term" value="F:translation release factor activity, codon specific"/>
    <property type="evidence" value="ECO:0007669"/>
    <property type="project" value="UniProtKB-UniRule"/>
</dbReference>
<dbReference type="FunFam" id="3.30.420.60:FF:000003">
    <property type="entry name" value="Peptide chain release factor subunit 1"/>
    <property type="match status" value="1"/>
</dbReference>
<dbReference type="FunFam" id="3.30.960.10:FF:000003">
    <property type="entry name" value="Peptide chain release factor subunit 1"/>
    <property type="match status" value="1"/>
</dbReference>
<dbReference type="Gene3D" id="1.20.5.170">
    <property type="match status" value="1"/>
</dbReference>
<dbReference type="Gene3D" id="3.30.1330.30">
    <property type="match status" value="1"/>
</dbReference>
<dbReference type="Gene3D" id="3.30.960.10">
    <property type="entry name" value="eRF1 domain 1"/>
    <property type="match status" value="1"/>
</dbReference>
<dbReference type="Gene3D" id="3.30.420.60">
    <property type="entry name" value="eRF1 domain 2"/>
    <property type="match status" value="1"/>
</dbReference>
<dbReference type="HAMAP" id="MF_00424">
    <property type="entry name" value="Rel_fact_arch_1"/>
    <property type="match status" value="1"/>
</dbReference>
<dbReference type="InterPro" id="IPR042226">
    <property type="entry name" value="eFR1_2_sf"/>
</dbReference>
<dbReference type="InterPro" id="IPR005140">
    <property type="entry name" value="eRF1_1_Pelota"/>
</dbReference>
<dbReference type="InterPro" id="IPR024049">
    <property type="entry name" value="eRF1_1_sf"/>
</dbReference>
<dbReference type="InterPro" id="IPR005141">
    <property type="entry name" value="eRF1_2"/>
</dbReference>
<dbReference type="InterPro" id="IPR005142">
    <property type="entry name" value="eRF1_3"/>
</dbReference>
<dbReference type="InterPro" id="IPR020918">
    <property type="entry name" value="Peptide_chain-rel_aRF1"/>
</dbReference>
<dbReference type="InterPro" id="IPR004403">
    <property type="entry name" value="Peptide_chain-rel_eRF1/aRF1"/>
</dbReference>
<dbReference type="InterPro" id="IPR029064">
    <property type="entry name" value="Ribosomal_eL30-like_sf"/>
</dbReference>
<dbReference type="NCBIfam" id="TIGR03676">
    <property type="entry name" value="aRF1_eRF1"/>
    <property type="match status" value="1"/>
</dbReference>
<dbReference type="PANTHER" id="PTHR10113">
    <property type="entry name" value="PEPTIDE CHAIN RELEASE FACTOR SUBUNIT 1"/>
    <property type="match status" value="1"/>
</dbReference>
<dbReference type="Pfam" id="PF03463">
    <property type="entry name" value="eRF1_1"/>
    <property type="match status" value="1"/>
</dbReference>
<dbReference type="Pfam" id="PF03464">
    <property type="entry name" value="eRF1_2"/>
    <property type="match status" value="1"/>
</dbReference>
<dbReference type="Pfam" id="PF03465">
    <property type="entry name" value="eRF1_3"/>
    <property type="match status" value="1"/>
</dbReference>
<dbReference type="SMART" id="SM01194">
    <property type="entry name" value="eRF1_1"/>
    <property type="match status" value="1"/>
</dbReference>
<dbReference type="SUPFAM" id="SSF55315">
    <property type="entry name" value="L30e-like"/>
    <property type="match status" value="1"/>
</dbReference>
<dbReference type="SUPFAM" id="SSF55481">
    <property type="entry name" value="N-terminal domain of eukaryotic peptide chain release factor subunit 1, ERF1"/>
    <property type="match status" value="1"/>
</dbReference>
<dbReference type="SUPFAM" id="SSF53137">
    <property type="entry name" value="Translational machinery components"/>
    <property type="match status" value="1"/>
</dbReference>
<gene>
    <name type="primary">prf1</name>
    <name type="ordered locus">Ta0534</name>
</gene>
<sequence>MLFMEDDEQIRRYEFKRALEELSKLHGRGTELISLYIPPDKQISDVVAYLRDEYSTSSNIKSKSTRKNVLAAIESIMARLKYYKTPPPNGFVFFEGHIATRGDQTEMYTKIIEPPEPITTFMYKCDSEFHLEMLKTMLEEKEIYGLIVIDRKEATVGFLNGTRIEVVDNVQSQVPSKHHQGGQSSRRFERLIEIAANEFFKKVGEIANNAFMPKIKDIRAIFLGGPGATKEYFFEKDYLRNEVKEKIKDLFDVGYTDESGLRELVEKASESIKDMKISKEKDLMNRFLREVRKPDGGLAIYGEQAIRDALEQKMVDLLLISEGLRKVRYTYRCPTCQAELTLNQEPNEWPVCEKDGTPMELVAEDDFIEDLYRLAKESGAQVEIISDQSEEGKLLKQAFGGMAAVLRFIRKDNVQMM</sequence>
<proteinExistence type="inferred from homology"/>
<comment type="function">
    <text evidence="1">Directs the termination of nascent peptide synthesis (translation) in response to the termination codons UAA, UAG and UGA.</text>
</comment>
<comment type="subunit">
    <text evidence="1">Heterodimer of two subunits, one of which binds GTP.</text>
</comment>
<comment type="subcellular location">
    <subcellularLocation>
        <location evidence="2">Cytoplasm</location>
    </subcellularLocation>
</comment>
<comment type="similarity">
    <text evidence="2">Belongs to the eukaryotic release factor 1 family.</text>
</comment>